<feature type="chain" id="PRO_0000222764" description="Non-structural protein PNS7">
    <location>
        <begin position="1"/>
        <end position="520"/>
    </location>
</feature>
<name>VP7_WTV</name>
<proteinExistence type="predicted"/>
<sequence length="520" mass="58748">MKISDFCFASANDGSYTLKAFSELNEYKDVVKLVSDEKIGVGFHCYNLGLMNIVEDFSGNLDNESYLTSKVGKRMASELVTAYSKFGSTSSRTLHSSLNLPVVNITSLPTSQAKDLKPNHSLDDKGSMLRTQIHSILTGNGPLTIKRRIDAFYYSASSIFTRHMTSKYANPGSNVPQRFSFIPDCAMNKKPTLFLENRDNELQDSMTIMLMLGQVFSDALTYYLNASILYGILGRIESKVQVDLPAITLESVHVTNNLEISPAAFALIASVWLDKAEILSKLNAIDFIVSPEDNEDRISNLLKLMLPVQSNNITVEKSDTRFSVTHSDGFMRYYMCFSKHEFDYGDHLESFGIPVLRVRLGKPISNELNKPMLVMFKKHESISSINVRYQVRGGSIPKFRTSEFRRDIGMLVANSRFMATDITLILSTFYPFTQETDKLFIEQHIKEIFLDMYPWIDKLTSADAKSEVNISYGNLVLYSYGELVKNSIFIAMMDNCKDARNSFSRADMREIQAFVAAFTQ</sequence>
<reference key="1">
    <citation type="journal article" date="1989" name="Virology">
        <title>Complete nucleotide sequence of wound tumor virus genomic segments encoding nonstructural polypeptides.</title>
        <authorList>
            <person name="Anzola J.V."/>
            <person name="Dall D.J."/>
            <person name="Xu Z."/>
            <person name="Nuss D.L."/>
        </authorList>
    </citation>
    <scope>NUCLEOTIDE SEQUENCE [GENOMIC RNA]</scope>
</reference>
<accession>P13092</accession>
<organismHost>
    <name type="scientific">Catharanthus roseus</name>
    <name type="common">Madagascar periwinkle</name>
    <name type="synonym">Vinca rosea</name>
    <dbReference type="NCBI Taxonomy" id="4058"/>
</organismHost>
<organismHost>
    <name type="scientific">Melilotus officinalis</name>
    <name type="common">Yellow sweet clover</name>
    <name type="synonym">Trifolium officinale</name>
    <dbReference type="NCBI Taxonomy" id="47083"/>
</organismHost>
<organismHost>
    <name type="scientific">Trifolium incarnatum</name>
    <name type="common">Crimson clover</name>
    <dbReference type="NCBI Taxonomy" id="60916"/>
</organismHost>
<dbReference type="EMBL" id="M24116">
    <property type="protein sequence ID" value="AAA48507.1"/>
    <property type="molecule type" value="Genomic_RNA"/>
</dbReference>
<dbReference type="PIR" id="B32442">
    <property type="entry name" value="MNXRW7"/>
</dbReference>
<dbReference type="Proteomes" id="UP000242823">
    <property type="component" value="Genome"/>
</dbReference>
<gene>
    <name type="primary">S6</name>
</gene>
<organism>
    <name type="scientific">Wound tumor virus</name>
    <name type="common">WTV</name>
    <dbReference type="NCBI Taxonomy" id="10987"/>
    <lineage>
        <taxon>Viruses</taxon>
        <taxon>Riboviria</taxon>
        <taxon>Orthornavirae</taxon>
        <taxon>Duplornaviricota</taxon>
        <taxon>Resentoviricetes</taxon>
        <taxon>Reovirales</taxon>
        <taxon>Sedoreoviridae</taxon>
        <taxon>Phytoreovirus</taxon>
    </lineage>
</organism>
<protein>
    <recommendedName>
        <fullName>Non-structural protein PNS7</fullName>
    </recommendedName>
</protein>